<reference key="1">
    <citation type="submission" date="2007-07" db="EMBL/GenBank/DDBJ databases">
        <title>Complete sequence of chromosome of Xanthobacter autotrophicus Py2.</title>
        <authorList>
            <consortium name="US DOE Joint Genome Institute"/>
            <person name="Copeland A."/>
            <person name="Lucas S."/>
            <person name="Lapidus A."/>
            <person name="Barry K."/>
            <person name="Glavina del Rio T."/>
            <person name="Hammon N."/>
            <person name="Israni S."/>
            <person name="Dalin E."/>
            <person name="Tice H."/>
            <person name="Pitluck S."/>
            <person name="Sims D."/>
            <person name="Brettin T."/>
            <person name="Bruce D."/>
            <person name="Detter J.C."/>
            <person name="Han C."/>
            <person name="Tapia R."/>
            <person name="Brainard J."/>
            <person name="Schmutz J."/>
            <person name="Larimer F."/>
            <person name="Land M."/>
            <person name="Hauser L."/>
            <person name="Kyrpides N."/>
            <person name="Kim E."/>
            <person name="Ensigns S.A."/>
            <person name="Richardson P."/>
        </authorList>
    </citation>
    <scope>NUCLEOTIDE SEQUENCE [LARGE SCALE GENOMIC DNA]</scope>
    <source>
        <strain>ATCC BAA-1158 / Py2</strain>
    </source>
</reference>
<proteinExistence type="inferred from homology"/>
<keyword id="KW-0058">Aromatic hydrocarbons catabolism</keyword>
<keyword id="KW-0223">Dioxygenase</keyword>
<keyword id="KW-0408">Iron</keyword>
<keyword id="KW-0560">Oxidoreductase</keyword>
<keyword id="KW-1185">Reference proteome</keyword>
<gene>
    <name evidence="1" type="primary">mhpB</name>
    <name type="ordered locus">Xaut_0932</name>
</gene>
<name>MHPB_XANP2</name>
<dbReference type="EC" id="1.13.11.16" evidence="1"/>
<dbReference type="EMBL" id="CP000781">
    <property type="protein sequence ID" value="ABS66183.1"/>
    <property type="molecule type" value="Genomic_DNA"/>
</dbReference>
<dbReference type="SMR" id="A7IDU0"/>
<dbReference type="STRING" id="78245.Xaut_0932"/>
<dbReference type="KEGG" id="xau:Xaut_0932"/>
<dbReference type="eggNOG" id="COG1355">
    <property type="taxonomic scope" value="Bacteria"/>
</dbReference>
<dbReference type="HOGENOM" id="CLU_078149_0_0_5"/>
<dbReference type="OrthoDB" id="8673673at2"/>
<dbReference type="PhylomeDB" id="A7IDU0"/>
<dbReference type="UniPathway" id="UPA00714"/>
<dbReference type="Proteomes" id="UP000002417">
    <property type="component" value="Chromosome"/>
</dbReference>
<dbReference type="GO" id="GO:0047070">
    <property type="term" value="F:3-carboxyethylcatechol 2,3-dioxygenase activity"/>
    <property type="evidence" value="ECO:0007669"/>
    <property type="project" value="UniProtKB-UniRule"/>
</dbReference>
<dbReference type="GO" id="GO:0008198">
    <property type="term" value="F:ferrous iron binding"/>
    <property type="evidence" value="ECO:0007669"/>
    <property type="project" value="InterPro"/>
</dbReference>
<dbReference type="GO" id="GO:0019380">
    <property type="term" value="P:3-phenylpropionate catabolic process"/>
    <property type="evidence" value="ECO:0007669"/>
    <property type="project" value="UniProtKB-UniRule"/>
</dbReference>
<dbReference type="CDD" id="cd07365">
    <property type="entry name" value="MhpB_like"/>
    <property type="match status" value="1"/>
</dbReference>
<dbReference type="Gene3D" id="3.40.830.10">
    <property type="entry name" value="LigB-like"/>
    <property type="match status" value="1"/>
</dbReference>
<dbReference type="HAMAP" id="MF_01653">
    <property type="entry name" value="MhpB"/>
    <property type="match status" value="1"/>
</dbReference>
<dbReference type="InterPro" id="IPR023789">
    <property type="entry name" value="DHPP/DHXA_dioxygenase"/>
</dbReference>
<dbReference type="InterPro" id="IPR004183">
    <property type="entry name" value="Xdiol_dOase_suB"/>
</dbReference>
<dbReference type="NCBIfam" id="NF009908">
    <property type="entry name" value="PRK13370.1-2"/>
    <property type="match status" value="1"/>
</dbReference>
<dbReference type="NCBIfam" id="NF009910">
    <property type="entry name" value="PRK13370.1-4"/>
    <property type="match status" value="1"/>
</dbReference>
<dbReference type="Pfam" id="PF02900">
    <property type="entry name" value="LigB"/>
    <property type="match status" value="1"/>
</dbReference>
<dbReference type="SUPFAM" id="SSF53213">
    <property type="entry name" value="LigB-like"/>
    <property type="match status" value="1"/>
</dbReference>
<comment type="function">
    <text evidence="1">Catalyzes the non-heme iron(II)-dependent oxidative cleavage of 2,3-dihydroxyphenylpropionic acid and 2,3-dihydroxicinnamic acid into 2-hydroxy-6-ketononadienedioate and 2-hydroxy-6-ketononatrienedioate, respectively.</text>
</comment>
<comment type="catalytic activity">
    <reaction evidence="1">
        <text>3-(2,3-dihydroxyphenyl)propanoate + O2 = (2Z,4E)-2-hydroxy-6-oxonona-2,4-dienedioate + H(+)</text>
        <dbReference type="Rhea" id="RHEA:23840"/>
        <dbReference type="ChEBI" id="CHEBI:15378"/>
        <dbReference type="ChEBI" id="CHEBI:15379"/>
        <dbReference type="ChEBI" id="CHEBI:46951"/>
        <dbReference type="ChEBI" id="CHEBI:66887"/>
        <dbReference type="EC" id="1.13.11.16"/>
    </reaction>
</comment>
<comment type="catalytic activity">
    <reaction evidence="1">
        <text>(2E)-3-(2,3-dihydroxyphenyl)prop-2-enoate + O2 = (2Z,4E,7E)-2-hydroxy-6-oxonona-2,4,7-trienedioate + H(+)</text>
        <dbReference type="Rhea" id="RHEA:25054"/>
        <dbReference type="ChEBI" id="CHEBI:15378"/>
        <dbReference type="ChEBI" id="CHEBI:15379"/>
        <dbReference type="ChEBI" id="CHEBI:58642"/>
        <dbReference type="ChEBI" id="CHEBI:66888"/>
        <dbReference type="EC" id="1.13.11.16"/>
    </reaction>
</comment>
<comment type="cofactor">
    <cofactor evidence="1">
        <name>Fe(2+)</name>
        <dbReference type="ChEBI" id="CHEBI:29033"/>
    </cofactor>
</comment>
<comment type="pathway">
    <text evidence="1">Aromatic compound metabolism; 3-phenylpropanoate degradation.</text>
</comment>
<comment type="subunit">
    <text evidence="1">Homotetramer.</text>
</comment>
<comment type="similarity">
    <text evidence="1">Belongs to the LigB/MhpB extradiol dioxygenase family.</text>
</comment>
<evidence type="ECO:0000255" key="1">
    <source>
        <dbReference type="HAMAP-Rule" id="MF_01653"/>
    </source>
</evidence>
<organism>
    <name type="scientific">Xanthobacter autotrophicus (strain ATCC BAA-1158 / Py2)</name>
    <dbReference type="NCBI Taxonomy" id="78245"/>
    <lineage>
        <taxon>Bacteria</taxon>
        <taxon>Pseudomonadati</taxon>
        <taxon>Pseudomonadota</taxon>
        <taxon>Alphaproteobacteria</taxon>
        <taxon>Hyphomicrobiales</taxon>
        <taxon>Xanthobacteraceae</taxon>
        <taxon>Xanthobacter</taxon>
    </lineage>
</organism>
<feature type="chain" id="PRO_1000187010" description="2,3-dihydroxyphenylpropionate/2,3-dihydroxicinnamic acid 1,2-dioxygenase">
    <location>
        <begin position="1"/>
        <end position="313"/>
    </location>
</feature>
<feature type="active site" description="Proton donor" evidence="1">
    <location>
        <position position="115"/>
    </location>
</feature>
<feature type="active site" description="Proton acceptor" evidence="1">
    <location>
        <position position="179"/>
    </location>
</feature>
<protein>
    <recommendedName>
        <fullName evidence="1">2,3-dihydroxyphenylpropionate/2,3-dihydroxicinnamic acid 1,2-dioxygenase</fullName>
        <ecNumber evidence="1">1.13.11.16</ecNumber>
    </recommendedName>
    <alternativeName>
        <fullName evidence="1">3-carboxyethylcatechol 2,3-dioxygenase</fullName>
    </alternativeName>
</protein>
<accession>A7IDU0</accession>
<sequence length="313" mass="34304">MTIKLKCLSHTPLRGLNDPAPEVIAEVDAVLARARADVEAFDPELIVIFAPDHYNGLFYDLMPPFVIATAAKSVGDYMTLPGPLSVERDLALELARFILDHDVDISLSHRLQVDHGCTQTLEELTGSLTRYPVIPIIINSVAPPFAPYRRIRRLGEVVGQFIATLDKRVLVLGTGGLSHEPPVPLLEGAPEAIGEFLICGRNPTPEARAARQERTIAAGKIYGTELSAQTPLNAEWDQAFIDLLLDARLDAVDDFSIEEISKEAGRSTHEVRTWVAAFAALAAARGGYSAHRDYYRPINEWIAGYGVMSAEPR</sequence>